<accession>A0BD92</accession>
<sequence>MSKCVNGLRSRLTAIIGAQWGDEGKGKLVDILAEKYDYCARFNGGANAGHTIVVGGVKYAFHLLPCGILYQTCMNVIGNGVVVNIPTLFEELAQLDKNRVDYTGRLVISNRAHLVVDGLLEADAKSESDSRKKFLGTTKRGIGPTYSAKALRQGLRVGDLLHWDTFLLKYHSLNAKLREQEGIQIDTQKEINTLKDYRDILINRNMIVDTISLIANARKDGRRILAEGANATMLDIDYGTYPYVTSSSTNVGGVCTGLGVPPSAIETVIGIVKAYTTRVGEGPFPTELTNETGKYLQKTGHEFGATTGRPRRCGWLDIPILRYSIQINGHSSINLTKLDILTGLEEIKIGVNYLLNGKVIDYIPAQLEELAQVEVEYITVKGWKQDISDCKTFSELPVEAQNYIKKIEELLGIPVSWIGNGPQREKIILKD</sequence>
<organism>
    <name type="scientific">Paramecium tetraurelia</name>
    <dbReference type="NCBI Taxonomy" id="5888"/>
    <lineage>
        <taxon>Eukaryota</taxon>
        <taxon>Sar</taxon>
        <taxon>Alveolata</taxon>
        <taxon>Ciliophora</taxon>
        <taxon>Intramacronucleata</taxon>
        <taxon>Oligohymenophorea</taxon>
        <taxon>Peniculida</taxon>
        <taxon>Parameciidae</taxon>
        <taxon>Paramecium</taxon>
    </lineage>
</organism>
<gene>
    <name type="ORF">GSPATT00004603001</name>
</gene>
<evidence type="ECO:0000250" key="1"/>
<evidence type="ECO:0000255" key="2">
    <source>
        <dbReference type="HAMAP-Rule" id="MF_03125"/>
    </source>
</evidence>
<proteinExistence type="inferred from homology"/>
<keyword id="KW-0963">Cytoplasm</keyword>
<keyword id="KW-0342">GTP-binding</keyword>
<keyword id="KW-0436">Ligase</keyword>
<keyword id="KW-0460">Magnesium</keyword>
<keyword id="KW-0479">Metal-binding</keyword>
<keyword id="KW-0547">Nucleotide-binding</keyword>
<keyword id="KW-0658">Purine biosynthesis</keyword>
<keyword id="KW-1185">Reference proteome</keyword>
<comment type="function">
    <text evidence="1">Plays an important role in the de novo pathway and in the salvage pathway of purine nucleotide biosynthesis. Catalyzes the first committed step in the biosynthesis of AMP from IMP (By similarity).</text>
</comment>
<comment type="catalytic activity">
    <reaction evidence="2">
        <text>IMP + L-aspartate + GTP = N(6)-(1,2-dicarboxyethyl)-AMP + GDP + phosphate + 2 H(+)</text>
        <dbReference type="Rhea" id="RHEA:15753"/>
        <dbReference type="ChEBI" id="CHEBI:15378"/>
        <dbReference type="ChEBI" id="CHEBI:29991"/>
        <dbReference type="ChEBI" id="CHEBI:37565"/>
        <dbReference type="ChEBI" id="CHEBI:43474"/>
        <dbReference type="ChEBI" id="CHEBI:57567"/>
        <dbReference type="ChEBI" id="CHEBI:58053"/>
        <dbReference type="ChEBI" id="CHEBI:58189"/>
        <dbReference type="EC" id="6.3.4.4"/>
    </reaction>
</comment>
<comment type="cofactor">
    <cofactor evidence="2">
        <name>Mg(2+)</name>
        <dbReference type="ChEBI" id="CHEBI:18420"/>
    </cofactor>
    <text evidence="2">Binds 1 Mg(2+) ion per subunit.</text>
</comment>
<comment type="pathway">
    <text evidence="2">Purine metabolism; AMP biosynthesis via de novo pathway; AMP from IMP: step 1/2.</text>
</comment>
<comment type="subunit">
    <text evidence="2">Homodimer.</text>
</comment>
<comment type="subcellular location">
    <subcellularLocation>
        <location evidence="2">Cytoplasm</location>
    </subcellularLocation>
</comment>
<comment type="similarity">
    <text evidence="2">Belongs to the adenylosuccinate synthetase family.</text>
</comment>
<name>PURA_PARTE</name>
<reference key="1">
    <citation type="journal article" date="2006" name="Nature">
        <title>Global trends of whole-genome duplications revealed by the ciliate Paramecium tetraurelia.</title>
        <authorList>
            <person name="Aury J.-M."/>
            <person name="Jaillon O."/>
            <person name="Duret L."/>
            <person name="Noel B."/>
            <person name="Jubin C."/>
            <person name="Porcel B.M."/>
            <person name="Segurens B."/>
            <person name="Daubin V."/>
            <person name="Anthouard V."/>
            <person name="Aiach N."/>
            <person name="Arnaiz O."/>
            <person name="Billaut A."/>
            <person name="Beisson J."/>
            <person name="Blanc I."/>
            <person name="Bouhouche K."/>
            <person name="Camara F."/>
            <person name="Duharcourt S."/>
            <person name="Guigo R."/>
            <person name="Gogendeau D."/>
            <person name="Katinka M."/>
            <person name="Keller A.-M."/>
            <person name="Kissmehl R."/>
            <person name="Klotz C."/>
            <person name="Koll F."/>
            <person name="Le Mouel A."/>
            <person name="Lepere G."/>
            <person name="Malinsky S."/>
            <person name="Nowacki M."/>
            <person name="Nowak J.K."/>
            <person name="Plattner H."/>
            <person name="Poulain J."/>
            <person name="Ruiz F."/>
            <person name="Serrano V."/>
            <person name="Zagulski M."/>
            <person name="Dessen P."/>
            <person name="Betermier M."/>
            <person name="Weissenbach J."/>
            <person name="Scarpelli C."/>
            <person name="Schaechter V."/>
            <person name="Sperling L."/>
            <person name="Meyer E."/>
            <person name="Cohen J."/>
            <person name="Wincker P."/>
        </authorList>
    </citation>
    <scope>NUCLEOTIDE SEQUENCE [LARGE SCALE GENOMIC DNA]</scope>
    <source>
        <strain>Stock d4-2</strain>
    </source>
</reference>
<feature type="chain" id="PRO_0000399290" description="Adenylosuccinate synthetase">
    <location>
        <begin position="1"/>
        <end position="431"/>
    </location>
</feature>
<feature type="active site" description="Proton acceptor" evidence="2">
    <location>
        <position position="22"/>
    </location>
</feature>
<feature type="active site" description="Proton donor" evidence="2">
    <location>
        <position position="50"/>
    </location>
</feature>
<feature type="binding site" evidence="2">
    <location>
        <begin position="21"/>
        <end position="27"/>
    </location>
    <ligand>
        <name>GTP</name>
        <dbReference type="ChEBI" id="CHEBI:37565"/>
    </ligand>
</feature>
<feature type="binding site" description="in other chain" evidence="2">
    <location>
        <begin position="22"/>
        <end position="25"/>
    </location>
    <ligand>
        <name>IMP</name>
        <dbReference type="ChEBI" id="CHEBI:58053"/>
        <note>ligand shared between dimeric partners</note>
    </ligand>
</feature>
<feature type="binding site" evidence="2">
    <location>
        <position position="22"/>
    </location>
    <ligand>
        <name>Mg(2+)</name>
        <dbReference type="ChEBI" id="CHEBI:18420"/>
    </ligand>
</feature>
<feature type="binding site" description="in other chain" evidence="2">
    <location>
        <begin position="47"/>
        <end position="50"/>
    </location>
    <ligand>
        <name>IMP</name>
        <dbReference type="ChEBI" id="CHEBI:58053"/>
        <note>ligand shared between dimeric partners</note>
    </ligand>
</feature>
<feature type="binding site" evidence="2">
    <location>
        <begin position="49"/>
        <end position="51"/>
    </location>
    <ligand>
        <name>GTP</name>
        <dbReference type="ChEBI" id="CHEBI:37565"/>
    </ligand>
</feature>
<feature type="binding site" evidence="2">
    <location>
        <position position="49"/>
    </location>
    <ligand>
        <name>Mg(2+)</name>
        <dbReference type="ChEBI" id="CHEBI:18420"/>
    </ligand>
</feature>
<feature type="binding site" description="in other chain" evidence="2">
    <location>
        <position position="138"/>
    </location>
    <ligand>
        <name>IMP</name>
        <dbReference type="ChEBI" id="CHEBI:58053"/>
        <note>ligand shared between dimeric partners</note>
    </ligand>
</feature>
<feature type="binding site" evidence="2">
    <location>
        <position position="152"/>
    </location>
    <ligand>
        <name>IMP</name>
        <dbReference type="ChEBI" id="CHEBI:58053"/>
        <note>ligand shared between dimeric partners</note>
    </ligand>
</feature>
<feature type="binding site" description="in other chain" evidence="2">
    <location>
        <position position="230"/>
    </location>
    <ligand>
        <name>IMP</name>
        <dbReference type="ChEBI" id="CHEBI:58053"/>
        <note>ligand shared between dimeric partners</note>
    </ligand>
</feature>
<feature type="binding site" description="in other chain" evidence="2">
    <location>
        <position position="245"/>
    </location>
    <ligand>
        <name>IMP</name>
        <dbReference type="ChEBI" id="CHEBI:58053"/>
        <note>ligand shared between dimeric partners</note>
    </ligand>
</feature>
<feature type="binding site" evidence="2">
    <location>
        <begin position="305"/>
        <end position="311"/>
    </location>
    <ligand>
        <name>substrate</name>
    </ligand>
</feature>
<feature type="binding site" description="in other chain" evidence="2">
    <location>
        <position position="309"/>
    </location>
    <ligand>
        <name>IMP</name>
        <dbReference type="ChEBI" id="CHEBI:58053"/>
        <note>ligand shared between dimeric partners</note>
    </ligand>
</feature>
<feature type="binding site" evidence="2">
    <location>
        <position position="311"/>
    </location>
    <ligand>
        <name>GTP</name>
        <dbReference type="ChEBI" id="CHEBI:37565"/>
    </ligand>
</feature>
<feature type="binding site" evidence="2">
    <location>
        <begin position="337"/>
        <end position="339"/>
    </location>
    <ligand>
        <name>GTP</name>
        <dbReference type="ChEBI" id="CHEBI:37565"/>
    </ligand>
</feature>
<feature type="binding site" evidence="2">
    <location>
        <begin position="419"/>
        <end position="421"/>
    </location>
    <ligand>
        <name>GTP</name>
        <dbReference type="ChEBI" id="CHEBI:37565"/>
    </ligand>
</feature>
<dbReference type="EC" id="6.3.4.4" evidence="2"/>
<dbReference type="EMBL" id="CT867986">
    <property type="protein sequence ID" value="CAK56509.1"/>
    <property type="molecule type" value="Genomic_DNA"/>
</dbReference>
<dbReference type="RefSeq" id="XP_001423907.1">
    <property type="nucleotide sequence ID" value="XM_001423870.1"/>
</dbReference>
<dbReference type="SMR" id="A0BD92"/>
<dbReference type="FunCoup" id="A0BD92">
    <property type="interactions" value="796"/>
</dbReference>
<dbReference type="STRING" id="5888.A0BD92"/>
<dbReference type="EnsemblProtists" id="CAK56509">
    <property type="protein sequence ID" value="CAK56509"/>
    <property type="gene ID" value="GSPATT00004603001"/>
</dbReference>
<dbReference type="GeneID" id="5009691"/>
<dbReference type="KEGG" id="ptm:GSPATT00004603001"/>
<dbReference type="eggNOG" id="KOG1355">
    <property type="taxonomic scope" value="Eukaryota"/>
</dbReference>
<dbReference type="HOGENOM" id="CLU_029848_0_0_1"/>
<dbReference type="InParanoid" id="A0BD92"/>
<dbReference type="OMA" id="FHHAKPI"/>
<dbReference type="OrthoDB" id="10265645at2759"/>
<dbReference type="UniPathway" id="UPA00075">
    <property type="reaction ID" value="UER00335"/>
</dbReference>
<dbReference type="Proteomes" id="UP000000600">
    <property type="component" value="Partially assembled WGS sequence"/>
</dbReference>
<dbReference type="GO" id="GO:0005737">
    <property type="term" value="C:cytoplasm"/>
    <property type="evidence" value="ECO:0000318"/>
    <property type="project" value="GO_Central"/>
</dbReference>
<dbReference type="GO" id="GO:0004019">
    <property type="term" value="F:adenylosuccinate synthase activity"/>
    <property type="evidence" value="ECO:0000318"/>
    <property type="project" value="GO_Central"/>
</dbReference>
<dbReference type="GO" id="GO:0005525">
    <property type="term" value="F:GTP binding"/>
    <property type="evidence" value="ECO:0007669"/>
    <property type="project" value="UniProtKB-UniRule"/>
</dbReference>
<dbReference type="GO" id="GO:0000287">
    <property type="term" value="F:magnesium ion binding"/>
    <property type="evidence" value="ECO:0007669"/>
    <property type="project" value="UniProtKB-UniRule"/>
</dbReference>
<dbReference type="GO" id="GO:0044208">
    <property type="term" value="P:'de novo' AMP biosynthetic process"/>
    <property type="evidence" value="ECO:0000318"/>
    <property type="project" value="GO_Central"/>
</dbReference>
<dbReference type="GO" id="GO:0046040">
    <property type="term" value="P:IMP metabolic process"/>
    <property type="evidence" value="ECO:0000318"/>
    <property type="project" value="GO_Central"/>
</dbReference>
<dbReference type="CDD" id="cd03108">
    <property type="entry name" value="AdSS"/>
    <property type="match status" value="1"/>
</dbReference>
<dbReference type="FunFam" id="3.90.170.10:FF:000001">
    <property type="entry name" value="Adenylosuccinate synthetase"/>
    <property type="match status" value="1"/>
</dbReference>
<dbReference type="Gene3D" id="3.40.440.10">
    <property type="entry name" value="Adenylosuccinate Synthetase, subunit A, domain 1"/>
    <property type="match status" value="1"/>
</dbReference>
<dbReference type="Gene3D" id="1.10.300.10">
    <property type="entry name" value="Adenylosuccinate Synthetase, subunit A, domain 2"/>
    <property type="match status" value="1"/>
</dbReference>
<dbReference type="Gene3D" id="3.90.170.10">
    <property type="entry name" value="Adenylosuccinate Synthetase, subunit A, domain 3"/>
    <property type="match status" value="1"/>
</dbReference>
<dbReference type="HAMAP" id="MF_00011">
    <property type="entry name" value="Adenylosucc_synth"/>
    <property type="match status" value="1"/>
</dbReference>
<dbReference type="InterPro" id="IPR018220">
    <property type="entry name" value="Adenylosuccin_syn_GTP-bd"/>
</dbReference>
<dbReference type="InterPro" id="IPR033128">
    <property type="entry name" value="Adenylosuccin_syn_Lys_AS"/>
</dbReference>
<dbReference type="InterPro" id="IPR042109">
    <property type="entry name" value="Adenylosuccinate_synth_dom1"/>
</dbReference>
<dbReference type="InterPro" id="IPR042110">
    <property type="entry name" value="Adenylosuccinate_synth_dom2"/>
</dbReference>
<dbReference type="InterPro" id="IPR042111">
    <property type="entry name" value="Adenylosuccinate_synth_dom3"/>
</dbReference>
<dbReference type="InterPro" id="IPR001114">
    <property type="entry name" value="Adenylosuccinate_synthetase"/>
</dbReference>
<dbReference type="InterPro" id="IPR027417">
    <property type="entry name" value="P-loop_NTPase"/>
</dbReference>
<dbReference type="NCBIfam" id="NF002223">
    <property type="entry name" value="PRK01117.1"/>
    <property type="match status" value="1"/>
</dbReference>
<dbReference type="NCBIfam" id="TIGR00184">
    <property type="entry name" value="purA"/>
    <property type="match status" value="1"/>
</dbReference>
<dbReference type="PANTHER" id="PTHR11846">
    <property type="entry name" value="ADENYLOSUCCINATE SYNTHETASE"/>
    <property type="match status" value="1"/>
</dbReference>
<dbReference type="PANTHER" id="PTHR11846:SF0">
    <property type="entry name" value="ADENYLOSUCCINATE SYNTHETASE"/>
    <property type="match status" value="1"/>
</dbReference>
<dbReference type="Pfam" id="PF00709">
    <property type="entry name" value="Adenylsucc_synt"/>
    <property type="match status" value="1"/>
</dbReference>
<dbReference type="SMART" id="SM00788">
    <property type="entry name" value="Adenylsucc_synt"/>
    <property type="match status" value="1"/>
</dbReference>
<dbReference type="SUPFAM" id="SSF52540">
    <property type="entry name" value="P-loop containing nucleoside triphosphate hydrolases"/>
    <property type="match status" value="1"/>
</dbReference>
<dbReference type="PROSITE" id="PS01266">
    <property type="entry name" value="ADENYLOSUCCIN_SYN_1"/>
    <property type="match status" value="1"/>
</dbReference>
<dbReference type="PROSITE" id="PS00513">
    <property type="entry name" value="ADENYLOSUCCIN_SYN_2"/>
    <property type="match status" value="1"/>
</dbReference>
<protein>
    <recommendedName>
        <fullName evidence="2">Adenylosuccinate synthetase</fullName>
        <shortName evidence="2">AMPSase</shortName>
        <shortName evidence="2">AdSS</shortName>
        <ecNumber evidence="2">6.3.4.4</ecNumber>
    </recommendedName>
    <alternativeName>
        <fullName evidence="2">IMP--aspartate ligase</fullName>
    </alternativeName>
</protein>